<dbReference type="EMBL" id="AY780259">
    <property type="protein sequence ID" value="AAX21093.1"/>
    <property type="molecule type" value="Genomic_DNA"/>
</dbReference>
<dbReference type="EMBL" id="AY780259">
    <property type="protein sequence ID" value="AAX21068.1"/>
    <property type="molecule type" value="Genomic_DNA"/>
</dbReference>
<dbReference type="SMR" id="Q49KT4"/>
<dbReference type="GO" id="GO:0009507">
    <property type="term" value="C:chloroplast"/>
    <property type="evidence" value="ECO:0007669"/>
    <property type="project" value="UniProtKB-SubCell"/>
</dbReference>
<dbReference type="GO" id="GO:0005762">
    <property type="term" value="C:mitochondrial large ribosomal subunit"/>
    <property type="evidence" value="ECO:0007669"/>
    <property type="project" value="TreeGrafter"/>
</dbReference>
<dbReference type="GO" id="GO:0019843">
    <property type="term" value="F:rRNA binding"/>
    <property type="evidence" value="ECO:0007669"/>
    <property type="project" value="UniProtKB-UniRule"/>
</dbReference>
<dbReference type="GO" id="GO:0003735">
    <property type="term" value="F:structural constituent of ribosome"/>
    <property type="evidence" value="ECO:0007669"/>
    <property type="project" value="InterPro"/>
</dbReference>
<dbReference type="GO" id="GO:0016740">
    <property type="term" value="F:transferase activity"/>
    <property type="evidence" value="ECO:0007669"/>
    <property type="project" value="InterPro"/>
</dbReference>
<dbReference type="GO" id="GO:0032543">
    <property type="term" value="P:mitochondrial translation"/>
    <property type="evidence" value="ECO:0007669"/>
    <property type="project" value="TreeGrafter"/>
</dbReference>
<dbReference type="FunFam" id="4.10.950.10:FF:000001">
    <property type="entry name" value="50S ribosomal protein L2"/>
    <property type="match status" value="1"/>
</dbReference>
<dbReference type="FunFam" id="2.30.30.30:FF:000008">
    <property type="entry name" value="50S ribosomal protein L2, chloroplastic"/>
    <property type="match status" value="1"/>
</dbReference>
<dbReference type="FunFam" id="2.40.50.140:FF:000029">
    <property type="entry name" value="50S ribosomal protein L2, chloroplastic"/>
    <property type="match status" value="1"/>
</dbReference>
<dbReference type="Gene3D" id="2.30.30.30">
    <property type="match status" value="1"/>
</dbReference>
<dbReference type="Gene3D" id="2.40.50.140">
    <property type="entry name" value="Nucleic acid-binding proteins"/>
    <property type="match status" value="1"/>
</dbReference>
<dbReference type="Gene3D" id="4.10.950.10">
    <property type="entry name" value="Ribosomal protein L2, domain 3"/>
    <property type="match status" value="1"/>
</dbReference>
<dbReference type="HAMAP" id="MF_01320_B">
    <property type="entry name" value="Ribosomal_uL2_B"/>
    <property type="match status" value="1"/>
</dbReference>
<dbReference type="InterPro" id="IPR012340">
    <property type="entry name" value="NA-bd_OB-fold"/>
</dbReference>
<dbReference type="InterPro" id="IPR014722">
    <property type="entry name" value="Rib_uL2_dom2"/>
</dbReference>
<dbReference type="InterPro" id="IPR002171">
    <property type="entry name" value="Ribosomal_uL2"/>
</dbReference>
<dbReference type="InterPro" id="IPR005880">
    <property type="entry name" value="Ribosomal_uL2_bac/org-type"/>
</dbReference>
<dbReference type="InterPro" id="IPR022669">
    <property type="entry name" value="Ribosomal_uL2_C"/>
</dbReference>
<dbReference type="InterPro" id="IPR022671">
    <property type="entry name" value="Ribosomal_uL2_CS"/>
</dbReference>
<dbReference type="InterPro" id="IPR014726">
    <property type="entry name" value="Ribosomal_uL2_dom3"/>
</dbReference>
<dbReference type="InterPro" id="IPR022666">
    <property type="entry name" value="Ribosomal_uL2_RNA-bd_dom"/>
</dbReference>
<dbReference type="InterPro" id="IPR008991">
    <property type="entry name" value="Translation_prot_SH3-like_sf"/>
</dbReference>
<dbReference type="NCBIfam" id="TIGR01171">
    <property type="entry name" value="rplB_bact"/>
    <property type="match status" value="1"/>
</dbReference>
<dbReference type="PANTHER" id="PTHR13691:SF5">
    <property type="entry name" value="LARGE RIBOSOMAL SUBUNIT PROTEIN UL2M"/>
    <property type="match status" value="1"/>
</dbReference>
<dbReference type="PANTHER" id="PTHR13691">
    <property type="entry name" value="RIBOSOMAL PROTEIN L2"/>
    <property type="match status" value="1"/>
</dbReference>
<dbReference type="Pfam" id="PF00181">
    <property type="entry name" value="Ribosomal_L2"/>
    <property type="match status" value="1"/>
</dbReference>
<dbReference type="Pfam" id="PF03947">
    <property type="entry name" value="Ribosomal_L2_C"/>
    <property type="match status" value="1"/>
</dbReference>
<dbReference type="PIRSF" id="PIRSF002158">
    <property type="entry name" value="Ribosomal_L2"/>
    <property type="match status" value="1"/>
</dbReference>
<dbReference type="SMART" id="SM01383">
    <property type="entry name" value="Ribosomal_L2"/>
    <property type="match status" value="1"/>
</dbReference>
<dbReference type="SMART" id="SM01382">
    <property type="entry name" value="Ribosomal_L2_C"/>
    <property type="match status" value="1"/>
</dbReference>
<dbReference type="SUPFAM" id="SSF50249">
    <property type="entry name" value="Nucleic acid-binding proteins"/>
    <property type="match status" value="1"/>
</dbReference>
<dbReference type="SUPFAM" id="SSF50104">
    <property type="entry name" value="Translation proteins SH3-like domain"/>
    <property type="match status" value="1"/>
</dbReference>
<dbReference type="PROSITE" id="PS00467">
    <property type="entry name" value="RIBOSOMAL_L2"/>
    <property type="match status" value="1"/>
</dbReference>
<proteinExistence type="inferred from homology"/>
<comment type="subunit">
    <text evidence="1">Part of the 50S ribosomal subunit.</text>
</comment>
<comment type="subcellular location">
    <subcellularLocation>
        <location>Plastid</location>
        <location>Chloroplast</location>
    </subcellularLocation>
</comment>
<comment type="similarity">
    <text evidence="4">Belongs to the universal ribosomal protein uL2 family.</text>
</comment>
<protein>
    <recommendedName>
        <fullName evidence="2">Large ribosomal subunit protein uL2cz/uL2cy</fullName>
    </recommendedName>
    <alternativeName>
        <fullName evidence="4">50S ribosomal protein L2, chloroplastic</fullName>
    </alternativeName>
</protein>
<keyword id="KW-0150">Chloroplast</keyword>
<keyword id="KW-0934">Plastid</keyword>
<keyword id="KW-0687">Ribonucleoprotein</keyword>
<keyword id="KW-0689">Ribosomal protein</keyword>
<geneLocation type="chloroplast"/>
<evidence type="ECO:0000250" key="1"/>
<evidence type="ECO:0000255" key="2">
    <source>
        <dbReference type="HAMAP-Rule" id="MF_01320"/>
    </source>
</evidence>
<evidence type="ECO:0000256" key="3">
    <source>
        <dbReference type="SAM" id="MobiDB-lite"/>
    </source>
</evidence>
<evidence type="ECO:0000305" key="4"/>
<reference key="1">
    <citation type="journal article" date="2005" name="DNA Res.">
        <title>Complete nucleotide sequence of the chloroplast genome from the Tasmanian blue gum, Eucalyptus globulus (Myrtaceae).</title>
        <authorList>
            <person name="Steane D.A."/>
        </authorList>
    </citation>
    <scope>NUCLEOTIDE SEQUENCE [LARGE SCALE GENOMIC DNA]</scope>
</reference>
<sequence length="274" mass="29889">MAIHLYKTSTPSTRNGAVDSQVKSNTRNNLIYGQHRCSKGRNARGIITAGHRGGGHKRLYRKIDFRRNEKDIYGRIVSIEYDPNRNASICLIHYGDGEKRYILHPRGAIIGDTIVSGTEVPIKMGNALPLTDMPLGTAIHNIEITLGKGGQLARAAGAVAKLIAKEGKSATLKLPSGEVRLISKNCSATVGQVGNVEVNQKKLGRAGSKCWLGKRPVVRGVVMNPVDHPHGGGEGRAPIGRKKPATPWGYPALGRRSRKRKKYSDNLILRRRSK</sequence>
<feature type="chain" id="PRO_0000237275" description="Large ribosomal subunit protein uL2cz/uL2cy">
    <location>
        <begin position="1"/>
        <end position="274"/>
    </location>
</feature>
<feature type="region of interest" description="Disordered" evidence="3">
    <location>
        <begin position="1"/>
        <end position="20"/>
    </location>
</feature>
<feature type="region of interest" description="Disordered" evidence="3">
    <location>
        <begin position="223"/>
        <end position="274"/>
    </location>
</feature>
<accession>Q49KT4</accession>
<gene>
    <name type="primary">rpl2-A</name>
</gene>
<gene>
    <name type="primary">rpl2-B</name>
</gene>
<name>RK2_EUCGG</name>
<organism>
    <name type="scientific">Eucalyptus globulus subsp. globulus</name>
    <name type="common">Tasmanian blue gum</name>
    <dbReference type="NCBI Taxonomy" id="71271"/>
    <lineage>
        <taxon>Eukaryota</taxon>
        <taxon>Viridiplantae</taxon>
        <taxon>Streptophyta</taxon>
        <taxon>Embryophyta</taxon>
        <taxon>Tracheophyta</taxon>
        <taxon>Spermatophyta</taxon>
        <taxon>Magnoliopsida</taxon>
        <taxon>eudicotyledons</taxon>
        <taxon>Gunneridae</taxon>
        <taxon>Pentapetalae</taxon>
        <taxon>rosids</taxon>
        <taxon>malvids</taxon>
        <taxon>Myrtales</taxon>
        <taxon>Myrtaceae</taxon>
        <taxon>Myrtoideae</taxon>
        <taxon>Eucalypteae</taxon>
        <taxon>Eucalyptus</taxon>
    </lineage>
</organism>